<protein>
    <recommendedName>
        <fullName evidence="1">Glucosamine-6-phosphate deaminase</fullName>
        <ecNumber evidence="1">3.5.99.6</ecNumber>
    </recommendedName>
    <alternativeName>
        <fullName evidence="1">GlcN6P deaminase</fullName>
        <shortName evidence="1">GNPDA</shortName>
    </alternativeName>
    <alternativeName>
        <fullName evidence="1">Glucosamine-6-phosphate isomerase</fullName>
    </alternativeName>
</protein>
<proteinExistence type="inferred from homology"/>
<comment type="function">
    <text evidence="1">Catalyzes the reversible isomerization-deamination of glucosamine 6-phosphate (GlcN6P) to form fructose 6-phosphate (Fru6P) and ammonium ion.</text>
</comment>
<comment type="catalytic activity">
    <reaction evidence="1">
        <text>alpha-D-glucosamine 6-phosphate + H2O = beta-D-fructose 6-phosphate + NH4(+)</text>
        <dbReference type="Rhea" id="RHEA:12172"/>
        <dbReference type="ChEBI" id="CHEBI:15377"/>
        <dbReference type="ChEBI" id="CHEBI:28938"/>
        <dbReference type="ChEBI" id="CHEBI:57634"/>
        <dbReference type="ChEBI" id="CHEBI:75989"/>
        <dbReference type="EC" id="3.5.99.6"/>
    </reaction>
</comment>
<comment type="activity regulation">
    <text evidence="1">Allosterically activated by N-acetylglucosamine 6-phosphate (GlcNAc6P).</text>
</comment>
<comment type="pathway">
    <text evidence="1">Amino-sugar metabolism; N-acetylneuraminate degradation; D-fructose 6-phosphate from N-acetylneuraminate: step 5/5.</text>
</comment>
<comment type="subunit">
    <text evidence="1">Homohexamer.</text>
</comment>
<comment type="similarity">
    <text evidence="1">Belongs to the glucosamine/galactosamine-6-phosphate isomerase family. NagB subfamily.</text>
</comment>
<organism>
    <name type="scientific">Yersinia pseudotuberculosis serotype IB (strain PB1/+)</name>
    <dbReference type="NCBI Taxonomy" id="502801"/>
    <lineage>
        <taxon>Bacteria</taxon>
        <taxon>Pseudomonadati</taxon>
        <taxon>Pseudomonadota</taxon>
        <taxon>Gammaproteobacteria</taxon>
        <taxon>Enterobacterales</taxon>
        <taxon>Yersiniaceae</taxon>
        <taxon>Yersinia</taxon>
    </lineage>
</organism>
<name>NAGB_YERPB</name>
<evidence type="ECO:0000255" key="1">
    <source>
        <dbReference type="HAMAP-Rule" id="MF_01241"/>
    </source>
</evidence>
<keyword id="KW-0021">Allosteric enzyme</keyword>
<keyword id="KW-0119">Carbohydrate metabolism</keyword>
<keyword id="KW-0378">Hydrolase</keyword>
<reference key="1">
    <citation type="submission" date="2008-04" db="EMBL/GenBank/DDBJ databases">
        <title>Complete sequence of Yersinia pseudotuberculosis PB1/+.</title>
        <authorList>
            <person name="Copeland A."/>
            <person name="Lucas S."/>
            <person name="Lapidus A."/>
            <person name="Glavina del Rio T."/>
            <person name="Dalin E."/>
            <person name="Tice H."/>
            <person name="Bruce D."/>
            <person name="Goodwin L."/>
            <person name="Pitluck S."/>
            <person name="Munk A.C."/>
            <person name="Brettin T."/>
            <person name="Detter J.C."/>
            <person name="Han C."/>
            <person name="Tapia R."/>
            <person name="Schmutz J."/>
            <person name="Larimer F."/>
            <person name="Land M."/>
            <person name="Hauser L."/>
            <person name="Challacombe J.F."/>
            <person name="Green L."/>
            <person name="Lindler L.E."/>
            <person name="Nikolich M.P."/>
            <person name="Richardson P."/>
        </authorList>
    </citation>
    <scope>NUCLEOTIDE SEQUENCE [LARGE SCALE GENOMIC DNA]</scope>
    <source>
        <strain>PB1/+</strain>
    </source>
</reference>
<sequence length="266" mass="29667">MRLIPLRNTAEVGKWAARHIVNRINAFKPTAERPFILGLPTGGTPMEAYKYLIAMHKAGEVSFKHVVTFNMDEYVGLPKEHPESYYTFMHTNFFDHVDIPAENINLLNGNAADIDAECRRYEEKIKSYGKIHLFMGGVGVDGHIAFNEPASSLASRTRIKTLTQETRIANSRFFGGDANLVPKYALTVGVGTLLDAEEVMILVTGHGKAQALQAAVEGSINHMWTISCLQLHAKAIMVCDEPSTMELKVKTVKYFRELEAENVKDL</sequence>
<gene>
    <name evidence="1" type="primary">nagB</name>
    <name type="ordered locus">YPTS_1177</name>
</gene>
<dbReference type="EC" id="3.5.99.6" evidence="1"/>
<dbReference type="EMBL" id="CP001048">
    <property type="protein sequence ID" value="ACC88152.1"/>
    <property type="molecule type" value="Genomic_DNA"/>
</dbReference>
<dbReference type="RefSeq" id="WP_002210352.1">
    <property type="nucleotide sequence ID" value="NZ_CP009780.1"/>
</dbReference>
<dbReference type="SMR" id="B2K8A2"/>
<dbReference type="GeneID" id="57976064"/>
<dbReference type="KEGG" id="ypb:YPTS_1177"/>
<dbReference type="PATRIC" id="fig|502801.10.peg.524"/>
<dbReference type="UniPathway" id="UPA00629">
    <property type="reaction ID" value="UER00684"/>
</dbReference>
<dbReference type="GO" id="GO:0005737">
    <property type="term" value="C:cytoplasm"/>
    <property type="evidence" value="ECO:0007669"/>
    <property type="project" value="TreeGrafter"/>
</dbReference>
<dbReference type="GO" id="GO:0004342">
    <property type="term" value="F:glucosamine-6-phosphate deaminase activity"/>
    <property type="evidence" value="ECO:0007669"/>
    <property type="project" value="UniProtKB-UniRule"/>
</dbReference>
<dbReference type="GO" id="GO:0042802">
    <property type="term" value="F:identical protein binding"/>
    <property type="evidence" value="ECO:0007669"/>
    <property type="project" value="TreeGrafter"/>
</dbReference>
<dbReference type="GO" id="GO:0005975">
    <property type="term" value="P:carbohydrate metabolic process"/>
    <property type="evidence" value="ECO:0007669"/>
    <property type="project" value="InterPro"/>
</dbReference>
<dbReference type="GO" id="GO:0006043">
    <property type="term" value="P:glucosamine catabolic process"/>
    <property type="evidence" value="ECO:0007669"/>
    <property type="project" value="TreeGrafter"/>
</dbReference>
<dbReference type="GO" id="GO:0006046">
    <property type="term" value="P:N-acetylglucosamine catabolic process"/>
    <property type="evidence" value="ECO:0007669"/>
    <property type="project" value="TreeGrafter"/>
</dbReference>
<dbReference type="GO" id="GO:0019262">
    <property type="term" value="P:N-acetylneuraminate catabolic process"/>
    <property type="evidence" value="ECO:0007669"/>
    <property type="project" value="UniProtKB-UniRule"/>
</dbReference>
<dbReference type="CDD" id="cd01399">
    <property type="entry name" value="GlcN6P_deaminase"/>
    <property type="match status" value="1"/>
</dbReference>
<dbReference type="FunFam" id="3.40.50.1360:FF:000002">
    <property type="entry name" value="Glucosamine-6-phosphate deaminase"/>
    <property type="match status" value="1"/>
</dbReference>
<dbReference type="Gene3D" id="3.40.50.1360">
    <property type="match status" value="1"/>
</dbReference>
<dbReference type="HAMAP" id="MF_01241">
    <property type="entry name" value="GlcN6P_deamin"/>
    <property type="match status" value="1"/>
</dbReference>
<dbReference type="InterPro" id="IPR006148">
    <property type="entry name" value="Glc/Gal-6P_isomerase"/>
</dbReference>
<dbReference type="InterPro" id="IPR004547">
    <property type="entry name" value="Glucosamine6P_isomerase"/>
</dbReference>
<dbReference type="InterPro" id="IPR018321">
    <property type="entry name" value="Glucosamine6P_isomerase_CS"/>
</dbReference>
<dbReference type="InterPro" id="IPR037171">
    <property type="entry name" value="NagB/RpiA_transferase-like"/>
</dbReference>
<dbReference type="NCBIfam" id="TIGR00502">
    <property type="entry name" value="nagB"/>
    <property type="match status" value="1"/>
</dbReference>
<dbReference type="NCBIfam" id="NF001685">
    <property type="entry name" value="PRK00443.1-5"/>
    <property type="match status" value="1"/>
</dbReference>
<dbReference type="PANTHER" id="PTHR11280">
    <property type="entry name" value="GLUCOSAMINE-6-PHOSPHATE ISOMERASE"/>
    <property type="match status" value="1"/>
</dbReference>
<dbReference type="PANTHER" id="PTHR11280:SF5">
    <property type="entry name" value="GLUCOSAMINE-6-PHOSPHATE ISOMERASE"/>
    <property type="match status" value="1"/>
</dbReference>
<dbReference type="Pfam" id="PF01182">
    <property type="entry name" value="Glucosamine_iso"/>
    <property type="match status" value="1"/>
</dbReference>
<dbReference type="SUPFAM" id="SSF100950">
    <property type="entry name" value="NagB/RpiA/CoA transferase-like"/>
    <property type="match status" value="1"/>
</dbReference>
<dbReference type="PROSITE" id="PS01161">
    <property type="entry name" value="GLC_GALNAC_ISOMERASE"/>
    <property type="match status" value="1"/>
</dbReference>
<feature type="chain" id="PRO_1000139801" description="Glucosamine-6-phosphate deaminase">
    <location>
        <begin position="1"/>
        <end position="266"/>
    </location>
</feature>
<feature type="active site" description="Proton acceptor; for enolization step" evidence="1">
    <location>
        <position position="72"/>
    </location>
</feature>
<feature type="active site" description="For ring-opening step" evidence="1">
    <location>
        <position position="141"/>
    </location>
</feature>
<feature type="active site" description="Proton acceptor; for ring-opening step" evidence="1">
    <location>
        <position position="143"/>
    </location>
</feature>
<feature type="active site" description="For ring-opening step" evidence="1">
    <location>
        <position position="148"/>
    </location>
</feature>
<feature type="site" description="Part of the allosteric site" evidence="1">
    <location>
        <position position="151"/>
    </location>
</feature>
<feature type="site" description="Part of the allosteric site" evidence="1">
    <location>
        <position position="158"/>
    </location>
</feature>
<feature type="site" description="Part of the allosteric site" evidence="1">
    <location>
        <position position="160"/>
    </location>
</feature>
<feature type="site" description="Part of the allosteric site" evidence="1">
    <location>
        <position position="161"/>
    </location>
</feature>
<feature type="site" description="Part of the allosteric site" evidence="1">
    <location>
        <position position="254"/>
    </location>
</feature>
<accession>B2K8A2</accession>